<organism>
    <name type="scientific">Phyllomedusa sauvagei</name>
    <name type="common">Sauvage's leaf frog</name>
    <dbReference type="NCBI Taxonomy" id="8395"/>
    <lineage>
        <taxon>Eukaryota</taxon>
        <taxon>Metazoa</taxon>
        <taxon>Chordata</taxon>
        <taxon>Craniata</taxon>
        <taxon>Vertebrata</taxon>
        <taxon>Euteleostomi</taxon>
        <taxon>Amphibia</taxon>
        <taxon>Batrachia</taxon>
        <taxon>Anura</taxon>
        <taxon>Neobatrachia</taxon>
        <taxon>Hyloidea</taxon>
        <taxon>Hylidae</taxon>
        <taxon>Phyllomedusinae</taxon>
        <taxon>Phyllomedusa</taxon>
    </lineage>
</organism>
<reference key="1">
    <citation type="journal article" date="2006" name="Biochemistry">
        <title>Dermaseptin S9, an alpha-helical antimicrobial peptide with a hydrophobic core and cationic termini.</title>
        <authorList>
            <person name="Lequin O."/>
            <person name="Ladram A."/>
            <person name="Chabbert L."/>
            <person name="Bruston F."/>
            <person name="Convert O."/>
            <person name="Vanhoye D."/>
            <person name="Chassaing G."/>
            <person name="Nicolas P."/>
            <person name="Amiche M."/>
        </authorList>
    </citation>
    <scope>NUCLEOTIDE SEQUENCE [MRNA]</scope>
    <source>
        <tissue>Skin</tissue>
    </source>
</reference>
<reference key="2">
    <citation type="journal article" date="2008" name="Peptides">
        <title>A consistent nomenclature of antimicrobial peptides isolated from frogs of the subfamily Phyllomedusinae.</title>
        <authorList>
            <person name="Amiche M."/>
            <person name="Ladram A."/>
            <person name="Nicolas P."/>
        </authorList>
    </citation>
    <scope>NOMENCLATURE</scope>
</reference>
<protein>
    <recommendedName>
        <fullName evidence="4 5">Dermaseptin-S11</fullName>
        <shortName evidence="4 5">DRS-S11</shortName>
    </recommendedName>
</protein>
<evidence type="ECO:0000250" key="1">
    <source>
        <dbReference type="UniProtKB" id="P84923"/>
    </source>
</evidence>
<evidence type="ECO:0000255" key="2"/>
<evidence type="ECO:0000256" key="3">
    <source>
        <dbReference type="SAM" id="MobiDB-lite"/>
    </source>
</evidence>
<evidence type="ECO:0000303" key="4">
    <source>
    </source>
</evidence>
<evidence type="ECO:0000303" key="5">
    <source>
    </source>
</evidence>
<evidence type="ECO:0000305" key="6"/>
<evidence type="ECO:0000305" key="7">
    <source>
    </source>
</evidence>
<dbReference type="EMBL" id="AJ972907">
    <property type="protein sequence ID" value="CAI99866.1"/>
    <property type="molecule type" value="mRNA"/>
</dbReference>
<dbReference type="GO" id="GO:0005576">
    <property type="term" value="C:extracellular region"/>
    <property type="evidence" value="ECO:0007669"/>
    <property type="project" value="UniProtKB-SubCell"/>
</dbReference>
<dbReference type="GO" id="GO:0016020">
    <property type="term" value="C:membrane"/>
    <property type="evidence" value="ECO:0007669"/>
    <property type="project" value="UniProtKB-KW"/>
</dbReference>
<dbReference type="GO" id="GO:0044218">
    <property type="term" value="C:other organism cell membrane"/>
    <property type="evidence" value="ECO:0007669"/>
    <property type="project" value="UniProtKB-KW"/>
</dbReference>
<dbReference type="GO" id="GO:0042742">
    <property type="term" value="P:defense response to bacterium"/>
    <property type="evidence" value="ECO:0007669"/>
    <property type="project" value="UniProtKB-KW"/>
</dbReference>
<dbReference type="GO" id="GO:0050832">
    <property type="term" value="P:defense response to fungus"/>
    <property type="evidence" value="ECO:0007669"/>
    <property type="project" value="UniProtKB-KW"/>
</dbReference>
<dbReference type="GO" id="GO:0045087">
    <property type="term" value="P:innate immune response"/>
    <property type="evidence" value="ECO:0007669"/>
    <property type="project" value="UniProtKB-KW"/>
</dbReference>
<dbReference type="GO" id="GO:0031640">
    <property type="term" value="P:killing of cells of another organism"/>
    <property type="evidence" value="ECO:0007669"/>
    <property type="project" value="UniProtKB-KW"/>
</dbReference>
<dbReference type="InterPro" id="IPR004275">
    <property type="entry name" value="Frog_antimicrobial_propeptide"/>
</dbReference>
<dbReference type="InterPro" id="IPR016322">
    <property type="entry name" value="FSAP"/>
</dbReference>
<dbReference type="Pfam" id="PF03032">
    <property type="entry name" value="FSAP_sig_propep"/>
    <property type="match status" value="1"/>
</dbReference>
<dbReference type="PIRSF" id="PIRSF001822">
    <property type="entry name" value="Dermaseptin_precursor"/>
    <property type="match status" value="1"/>
</dbReference>
<name>DRS11_PHYSA</name>
<sequence>MAFLKKSLFLVLFLGMVSLSICEEEKRENEDEEEQEDDEQSEEKRALWKTLLKGAGKVFGHVAKQFLGSQGQPES</sequence>
<keyword id="KW-0878">Amphibian defense peptide</keyword>
<keyword id="KW-0044">Antibiotic</keyword>
<keyword id="KW-0929">Antimicrobial</keyword>
<keyword id="KW-0165">Cleavage on pair of basic residues</keyword>
<keyword id="KW-0295">Fungicide</keyword>
<keyword id="KW-0391">Immunity</keyword>
<keyword id="KW-0399">Innate immunity</keyword>
<keyword id="KW-0472">Membrane</keyword>
<keyword id="KW-0964">Secreted</keyword>
<keyword id="KW-0732">Signal</keyword>
<keyword id="KW-1052">Target cell membrane</keyword>
<keyword id="KW-1053">Target membrane</keyword>
<proteinExistence type="inferred from homology"/>
<comment type="function">
    <text evidence="1">Antimicrobial peptide with activity against Gram-positive and Gram-negative bacteria, and fungi. Has hemolytic activity.</text>
</comment>
<comment type="subcellular location">
    <subcellularLocation>
        <location evidence="7">Secreted</location>
    </subcellularLocation>
    <subcellularLocation>
        <location evidence="6">Target cell membrane</location>
    </subcellularLocation>
</comment>
<comment type="tissue specificity">
    <text evidence="7">Expressed by the skin glands.</text>
</comment>
<comment type="similarity">
    <text evidence="2">Belongs to the frog skin active peptide (FSAP) family. Dermaseptin subfamily.</text>
</comment>
<comment type="online information" name="The antimicrobial peptide database">
    <link uri="https://wangapd3.com/database/query_output.php?ID=0939"/>
</comment>
<feature type="signal peptide" evidence="2">
    <location>
        <begin position="1"/>
        <end position="22"/>
    </location>
</feature>
<feature type="propeptide" id="PRO_0000449595" evidence="7">
    <location>
        <begin position="23"/>
        <end position="45"/>
    </location>
</feature>
<feature type="peptide" id="PRO_5004188695" description="Dermaseptin-S11">
    <location>
        <begin position="46"/>
        <end position="75"/>
    </location>
</feature>
<feature type="region of interest" description="Disordered" evidence="3">
    <location>
        <begin position="25"/>
        <end position="44"/>
    </location>
</feature>
<feature type="compositionally biased region" description="Acidic residues" evidence="3">
    <location>
        <begin position="30"/>
        <end position="41"/>
    </location>
</feature>
<accession>Q1EN13</accession>